<comment type="function">
    <text evidence="1 2">Antimicrobial and mast cell degranulating peptide which probably acts by forming pores in membranes (By similarity). Active against both Gram-negative and Gram-positive bacterial strains as well as against yeasts (By similarity). Has little hemolytic activity (By similarity). In the context of inflammation and cancer tests, is weakly cytotoxic to normal cells, induces calcium signaling but does not impact cAMP production (PubMed:36548715). In addition, prevents LPS-induced nitric oxid (NO) synthesis but does not affect the IP3 signaling and pro-inflammatory activation of endothelial cells (PubMed:36548715). Also shows significant antiproliferative activity on the breast cancer cell line MDA-MB-231 (PubMed:36548715).</text>
</comment>
<comment type="subcellular location">
    <subcellularLocation>
        <location evidence="5">Secreted</location>
    </subcellularLocation>
    <subcellularLocation>
        <location evidence="4">Target cell membrane</location>
    </subcellularLocation>
    <text evidence="4">Assumes an amphipathic alpha-helical conformation in a lipid environment.</text>
</comment>
<comment type="tissue specificity">
    <text evidence="5">Expressed by the venom gland.</text>
</comment>
<comment type="similarity">
    <text evidence="4">Belongs to the xylopin-like family.</text>
</comment>
<sequence length="19" mass="2178">GVLSLLKKFTMILKHVHVN</sequence>
<feature type="peptide" id="PRO_0000457819" description="Antimicrobial peptide Xac-4" evidence="5">
    <location>
        <begin position="1"/>
        <end position="19"/>
    </location>
</feature>
<proteinExistence type="inferred from homology"/>
<reference key="1">
    <citation type="journal article" date="2022" name="Toxins">
        <title>The pharmacological potential of novel melittin variants from the honeybee and solitary bees against inflammation and cancer.</title>
        <authorList>
            <person name="Erkoc P."/>
            <person name="von Reumont B.M."/>
            <person name="Lueddecke T."/>
            <person name="Henke M."/>
            <person name="Ulshoefer T."/>
            <person name="Vilcinskas A."/>
            <person name="Fuerst R."/>
            <person name="Schiffmann S."/>
        </authorList>
    </citation>
    <scope>NUCLEOTIDE SEQUENCE [MRNA]</scope>
    <scope>FUNCTION</scope>
    <source>
        <tissue>Venom gland</tissue>
    </source>
</reference>
<name>XAC4_XYLVO</name>
<protein>
    <recommendedName>
        <fullName evidence="5">Antimicrobial peptide Xac-4</fullName>
        <shortName evidence="3">Xac4</shortName>
    </recommendedName>
</protein>
<organism>
    <name type="scientific">Xylocopa violacea</name>
    <name type="common">Violet carpenter bee</name>
    <name type="synonym">Apis violacea</name>
    <dbReference type="NCBI Taxonomy" id="135666"/>
    <lineage>
        <taxon>Eukaryota</taxon>
        <taxon>Metazoa</taxon>
        <taxon>Ecdysozoa</taxon>
        <taxon>Arthropoda</taxon>
        <taxon>Hexapoda</taxon>
        <taxon>Insecta</taxon>
        <taxon>Pterygota</taxon>
        <taxon>Neoptera</taxon>
        <taxon>Endopterygota</taxon>
        <taxon>Hymenoptera</taxon>
        <taxon>Apocrita</taxon>
        <taxon>Aculeata</taxon>
        <taxon>Apoidea</taxon>
        <taxon>Anthophila</taxon>
        <taxon>Apidae</taxon>
        <taxon>Xylocopa</taxon>
        <taxon>Xylocopa</taxon>
    </lineage>
</organism>
<dbReference type="GO" id="GO:0005576">
    <property type="term" value="C:extracellular region"/>
    <property type="evidence" value="ECO:0007669"/>
    <property type="project" value="UniProtKB-SubCell"/>
</dbReference>
<dbReference type="GO" id="GO:0016020">
    <property type="term" value="C:membrane"/>
    <property type="evidence" value="ECO:0007669"/>
    <property type="project" value="UniProtKB-KW"/>
</dbReference>
<dbReference type="GO" id="GO:0044218">
    <property type="term" value="C:other organism cell membrane"/>
    <property type="evidence" value="ECO:0007669"/>
    <property type="project" value="UniProtKB-KW"/>
</dbReference>
<dbReference type="GO" id="GO:0042742">
    <property type="term" value="P:defense response to bacterium"/>
    <property type="evidence" value="ECO:0007669"/>
    <property type="project" value="UniProtKB-KW"/>
</dbReference>
<dbReference type="GO" id="GO:0050832">
    <property type="term" value="P:defense response to fungus"/>
    <property type="evidence" value="ECO:0007669"/>
    <property type="project" value="UniProtKB-KW"/>
</dbReference>
<dbReference type="GO" id="GO:0045087">
    <property type="term" value="P:innate immune response"/>
    <property type="evidence" value="ECO:0007669"/>
    <property type="project" value="UniProtKB-KW"/>
</dbReference>
<dbReference type="GO" id="GO:0031640">
    <property type="term" value="P:killing of cells of another organism"/>
    <property type="evidence" value="ECO:0007669"/>
    <property type="project" value="UniProtKB-KW"/>
</dbReference>
<evidence type="ECO:0000250" key="1">
    <source>
        <dbReference type="UniProtKB" id="C0HKQ5"/>
    </source>
</evidence>
<evidence type="ECO:0000269" key="2">
    <source>
    </source>
</evidence>
<evidence type="ECO:0000303" key="3">
    <source>
    </source>
</evidence>
<evidence type="ECO:0000305" key="4"/>
<evidence type="ECO:0000305" key="5">
    <source>
    </source>
</evidence>
<accession>P0DQX8</accession>
<keyword id="KW-0044">Antibiotic</keyword>
<keyword id="KW-0929">Antimicrobial</keyword>
<keyword id="KW-0295">Fungicide</keyword>
<keyword id="KW-0391">Immunity</keyword>
<keyword id="KW-0399">Innate immunity</keyword>
<keyword id="KW-0472">Membrane</keyword>
<keyword id="KW-0964">Secreted</keyword>
<keyword id="KW-1052">Target cell membrane</keyword>
<keyword id="KW-1053">Target membrane</keyword>